<keyword id="KW-0017">Alkaloid metabolism</keyword>
<keyword id="KW-0489">Methyltransferase</keyword>
<keyword id="KW-0949">S-adenosyl-L-methionine</keyword>
<keyword id="KW-0808">Transferase</keyword>
<reference key="1">
    <citation type="journal article" date="2003" name="Phytochemistry">
        <title>Developmental and inducible accumulation of gene transcripts involved in alkaloid biosynthesis in opium poppy.</title>
        <authorList>
            <person name="Facchini P.J."/>
            <person name="Park S.U."/>
        </authorList>
    </citation>
    <scope>NUCLEOTIDE SEQUENCE [MRNA]</scope>
    <scope>NOMENCLATURE</scope>
    <scope>TISSUE SPECIFICITY</scope>
    <scope>DEVELOPMENTAL STAGE</scope>
    <scope>INDUCTION BY ELICITOR AND WOUNDING</scope>
    <source>
        <strain>cv. Marianne</strain>
    </source>
</reference>
<reference key="2">
    <citation type="journal article" date="2005" name="Planta">
        <title>Comparative macroarray analysis of morphine containing Papaver somniferum and eight morphine free Papaver species identifies an O-methyltransferase involved in benzylisoquinoline biosynthesis.</title>
        <authorList>
            <person name="Ziegler J."/>
            <person name="Diaz-Chavez M.L."/>
            <person name="Kramell R."/>
            <person name="Ammer C."/>
            <person name="Kutchan T.M."/>
        </authorList>
    </citation>
    <scope>NUCLEOTIDE SEQUENCE [MRNA]</scope>
    <scope>SUBUNIT</scope>
    <scope>FUNCTION</scope>
    <scope>CATALYTIC ACTIVITY</scope>
    <scope>BIOPHYSICOCHEMICAL PROPERTIES</scope>
</reference>
<reference key="3">
    <citation type="journal article" date="2006" name="Plant J.">
        <title>The role of phloem sieve elements and laticifers in the biosynthesis and accumulation of alkaloids in opium poppy.</title>
        <authorList>
            <person name="Samanani N."/>
            <person name="Alcantara J."/>
            <person name="Bourgault R."/>
            <person name="Zulak K.G."/>
            <person name="Facchini P.J."/>
        </authorList>
    </citation>
    <scope>NUCLEOTIDE SEQUENCE [MRNA]</scope>
    <source>
        <strain>cv. Marianne</strain>
    </source>
</reference>
<reference key="4">
    <citation type="journal article" date="2012" name="Plant J.">
        <title>Systematic silencing of benzylisoquinoline alkaloid biosynthetic genes reveals the major route to papaverine in opium poppy.</title>
        <authorList>
            <person name="Desgagne-Penix I."/>
            <person name="Facchini P.J."/>
        </authorList>
    </citation>
    <scope>FUNCTION</scope>
</reference>
<reference key="5">
    <citation type="journal article" date="2013" name="PLoS ONE">
        <title>Comparative transcriptome analysis using high papaverine mutant of Papaver somniferum reveals pathway and uncharacterized steps of papaverine biosynthesis.</title>
        <authorList>
            <person name="Pathak S."/>
            <person name="Lakhwani D."/>
            <person name="Gupta P."/>
            <person name="Mishra B.K."/>
            <person name="Shukla S."/>
            <person name="Asif M.H."/>
            <person name="Trivedi P.K."/>
        </authorList>
    </citation>
    <scope>FUNCTION</scope>
</reference>
<accession>Q7XB10</accession>
<name>4OMT2_PAPSO</name>
<dbReference type="EC" id="2.1.1.116" evidence="3"/>
<dbReference type="EMBL" id="AY217334">
    <property type="protein sequence ID" value="AAP45314.1"/>
    <property type="molecule type" value="mRNA"/>
</dbReference>
<dbReference type="SMR" id="Q7XB10"/>
<dbReference type="OrthoDB" id="1606438at2759"/>
<dbReference type="BRENDA" id="2.1.1.116">
    <property type="organism ID" value="4515"/>
</dbReference>
<dbReference type="UniPathway" id="UPA00306">
    <property type="reaction ID" value="UER00444"/>
</dbReference>
<dbReference type="PRO" id="PR:Q7XB10"/>
<dbReference type="GO" id="GO:0030784">
    <property type="term" value="F:3'-hydroxy-N-methyl-(S)-coclaurine 4'-O-methyltransferase activity"/>
    <property type="evidence" value="ECO:0007669"/>
    <property type="project" value="UniProtKB-EC"/>
</dbReference>
<dbReference type="GO" id="GO:0008171">
    <property type="term" value="F:O-methyltransferase activity"/>
    <property type="evidence" value="ECO:0007669"/>
    <property type="project" value="InterPro"/>
</dbReference>
<dbReference type="GO" id="GO:0046983">
    <property type="term" value="F:protein dimerization activity"/>
    <property type="evidence" value="ECO:0007669"/>
    <property type="project" value="InterPro"/>
</dbReference>
<dbReference type="GO" id="GO:0009820">
    <property type="term" value="P:alkaloid metabolic process"/>
    <property type="evidence" value="ECO:0007669"/>
    <property type="project" value="UniProtKB-KW"/>
</dbReference>
<dbReference type="GO" id="GO:0032259">
    <property type="term" value="P:methylation"/>
    <property type="evidence" value="ECO:0007669"/>
    <property type="project" value="UniProtKB-KW"/>
</dbReference>
<dbReference type="Gene3D" id="3.40.50.150">
    <property type="entry name" value="Vaccinia Virus protein VP39"/>
    <property type="match status" value="1"/>
</dbReference>
<dbReference type="Gene3D" id="1.10.10.10">
    <property type="entry name" value="Winged helix-like DNA-binding domain superfamily/Winged helix DNA-binding domain"/>
    <property type="match status" value="1"/>
</dbReference>
<dbReference type="InterPro" id="IPR016461">
    <property type="entry name" value="COMT-like"/>
</dbReference>
<dbReference type="InterPro" id="IPR001077">
    <property type="entry name" value="O_MeTrfase_dom"/>
</dbReference>
<dbReference type="InterPro" id="IPR012967">
    <property type="entry name" value="Plant_O-MeTrfase_dimerisation"/>
</dbReference>
<dbReference type="InterPro" id="IPR029063">
    <property type="entry name" value="SAM-dependent_MTases_sf"/>
</dbReference>
<dbReference type="InterPro" id="IPR036388">
    <property type="entry name" value="WH-like_DNA-bd_sf"/>
</dbReference>
<dbReference type="InterPro" id="IPR036390">
    <property type="entry name" value="WH_DNA-bd_sf"/>
</dbReference>
<dbReference type="PANTHER" id="PTHR11746">
    <property type="entry name" value="O-METHYLTRANSFERASE"/>
    <property type="match status" value="1"/>
</dbReference>
<dbReference type="Pfam" id="PF08100">
    <property type="entry name" value="Dimerisation"/>
    <property type="match status" value="1"/>
</dbReference>
<dbReference type="Pfam" id="PF00891">
    <property type="entry name" value="Methyltransf_2"/>
    <property type="match status" value="1"/>
</dbReference>
<dbReference type="PIRSF" id="PIRSF005739">
    <property type="entry name" value="O-mtase"/>
    <property type="match status" value="1"/>
</dbReference>
<dbReference type="SUPFAM" id="SSF53335">
    <property type="entry name" value="S-adenosyl-L-methionine-dependent methyltransferases"/>
    <property type="match status" value="1"/>
</dbReference>
<dbReference type="SUPFAM" id="SSF46785">
    <property type="entry name" value="Winged helix' DNA-binding domain"/>
    <property type="match status" value="1"/>
</dbReference>
<dbReference type="PROSITE" id="PS51683">
    <property type="entry name" value="SAM_OMT_II"/>
    <property type="match status" value="1"/>
</dbReference>
<proteinExistence type="evidence at protein level"/>
<organism evidence="8">
    <name type="scientific">Papaver somniferum</name>
    <name type="common">Opium poppy</name>
    <dbReference type="NCBI Taxonomy" id="3469"/>
    <lineage>
        <taxon>Eukaryota</taxon>
        <taxon>Viridiplantae</taxon>
        <taxon>Streptophyta</taxon>
        <taxon>Embryophyta</taxon>
        <taxon>Tracheophyta</taxon>
        <taxon>Spermatophyta</taxon>
        <taxon>Magnoliopsida</taxon>
        <taxon>Ranunculales</taxon>
        <taxon>Papaveraceae</taxon>
        <taxon>Papaveroideae</taxon>
        <taxon>Papaver</taxon>
    </lineage>
</organism>
<gene>
    <name evidence="6" type="primary">4'OMT2</name>
</gene>
<evidence type="ECO:0000255" key="1">
    <source>
        <dbReference type="PROSITE-ProRule" id="PRU01020"/>
    </source>
</evidence>
<evidence type="ECO:0000269" key="2">
    <source>
    </source>
</evidence>
<evidence type="ECO:0000269" key="3">
    <source>
    </source>
</evidence>
<evidence type="ECO:0000269" key="4">
    <source>
    </source>
</evidence>
<evidence type="ECO:0000269" key="5">
    <source>
    </source>
</evidence>
<evidence type="ECO:0000303" key="6">
    <source>
    </source>
</evidence>
<evidence type="ECO:0000305" key="7"/>
<evidence type="ECO:0000312" key="8">
    <source>
        <dbReference type="EMBL" id="AAP45314.1"/>
    </source>
</evidence>
<protein>
    <recommendedName>
        <fullName evidence="6">3'-hydroxy-N-methyl-(S)-coclaurine 4'-O-methyltransferase 2</fullName>
        <shortName evidence="7">4'-OMT2</shortName>
        <shortName evidence="6">Ps4'OMT2</shortName>
        <ecNumber evidence="3">2.1.1.116</ecNumber>
    </recommendedName>
    <alternativeName>
        <fullName evidence="7">S-adenosyl-L-methionine:3'-hydroxy-N-methylcoclaurine 4'-O-methyltransferase</fullName>
    </alternativeName>
</protein>
<comment type="function">
    <text evidence="3 4 5">Involved in the biosynthesis of benzylisoquinoline alkaloids (PubMed:16034588, PubMed:22725256, PubMed:23738019). Catalyzes the transfer of the methyl group to the 4'-hydroxyl group of 3'-hydroxy-N-methylcoclaurine to form reticuline (PubMed:16034588). Can also use laudanosoline and, with a lower activity, 6-O-methylnorlaudanosoline and norlaudanosoline as substrates (PubMed:16034588). Also involved in the papaverine biosynthesis (PubMed:22725256, PubMed:23738019).</text>
</comment>
<comment type="catalytic activity">
    <reaction evidence="3">
        <text>(S)-3'-hydroxy-N-methylcoclaurine + S-adenosyl-L-methionine = (S)-reticuline + S-adenosyl-L-homocysteine + H(+)</text>
        <dbReference type="Rhea" id="RHEA:17789"/>
        <dbReference type="ChEBI" id="CHEBI:15378"/>
        <dbReference type="ChEBI" id="CHEBI:57856"/>
        <dbReference type="ChEBI" id="CHEBI:57873"/>
        <dbReference type="ChEBI" id="CHEBI:58010"/>
        <dbReference type="ChEBI" id="CHEBI:59789"/>
        <dbReference type="EC" id="2.1.1.116"/>
    </reaction>
</comment>
<comment type="biophysicochemical properties">
    <kinetics>
        <KM evidence="3">81 uM for 3'-hydroxy-N-methyl-(S)-coclaurine</KM>
        <KM evidence="3">39 uM for laudanosoline</KM>
        <KM evidence="3">31 uM for 6-O-methylnorlaudanosoline</KM>
        <KM evidence="3">37 uM for norlaudanosoline</KM>
        <KM evidence="3">179 uM for S-adenosyl-L-methionine with 6-O-methylnorlaudanosoline as substrate</KM>
        <KM evidence="3">136 uM for S-adenosyl-L-methionine with norlaudanosoline as substrate</KM>
        <Vmax evidence="3">1824.0 pmol/sec/mg enzyme with 3'-hydroxy-N-methyl-(S)-coclaurine as substrate</Vmax>
        <Vmax evidence="3">1239.0 pmol/sec/mg enzyme with laudanosoline as substrate</Vmax>
        <Vmax evidence="3">588.0 pmol/sec/mg enzyme with 6-O-methylnorlaudanosoline as substrate</Vmax>
        <Vmax evidence="3">236.0 pmol/sec/mg enzyme with norlaudanosoline as substrate</Vmax>
    </kinetics>
    <phDependence>
        <text evidence="3">Optimum pH is 7.0.</text>
    </phDependence>
    <temperatureDependence>
        <text evidence="3">Optimum temperature is 40 degrees Celsius.</text>
    </temperatureDependence>
</comment>
<comment type="pathway">
    <text>Alkaloid biosynthesis; (S)-reticuline biosynthesis; (S)-reticuline from (S)-norcoclaurine: step 4/4.</text>
</comment>
<comment type="subunit">
    <text evidence="3">Homodimer.</text>
</comment>
<comment type="tissue specificity">
    <text evidence="2">Expressed in roots, stems, leaves and flowers (PubMed:12946416).</text>
</comment>
<comment type="developmental stage">
    <text evidence="2">Transiently induced from 4 to 7 days after seed imbibition.</text>
</comment>
<comment type="induction">
    <text evidence="2">Up-regulated upon fungal elicitor treatment or wounding.</text>
</comment>
<comment type="similarity">
    <text evidence="7">Belongs to the class I-like SAM-binding methyltransferase superfamily. Cation-independent O-methyltransferase family. COMT subfamily.</text>
</comment>
<feature type="chain" id="PRO_0000433985" description="3'-hydroxy-N-methyl-(S)-coclaurine 4'-O-methyltransferase 2">
    <location>
        <begin position="1"/>
        <end position="357"/>
    </location>
</feature>
<feature type="active site" description="Proton acceptor" evidence="1">
    <location>
        <position position="264"/>
    </location>
</feature>
<feature type="binding site" evidence="1">
    <location>
        <position position="226"/>
    </location>
    <ligand>
        <name>S-adenosyl-L-methionine</name>
        <dbReference type="ChEBI" id="CHEBI:59789"/>
    </ligand>
</feature>
<sequence>MGSLDAKPAAATQEVSIKDQAQLWNIIYGFADSLVLRCAVEIGIADIIKNNDGAITLAQLAAKLPITNVSSDYLYRMVRYLVHLNIIEQETCNGGVEKVYSLKPVGTLLLRDAERSMVPMILGMTQKDFMVSWHFMKEGLGNGSTTAFEKGMGMDIWKYLEGNPDQSQLFNEGMAGETRLLTKTLIEDCRDTFQGLDSLVDIGGGNGTTIKAIYEAFPHIKCTLYDLPHVVANSHDLPNIEKVPGDMFKSVPSAQAILLKLILHDWTDEECVNILKKCKEAIPKETGKVIIVDVALEEESNHELTKTRLILDIDMLVNTGGRERTADDWENLLKRAGFRSHKIRPIRAIQSVIEAFP</sequence>